<organism>
    <name type="scientific">Shigella flexneri serotype 5b (strain 8401)</name>
    <dbReference type="NCBI Taxonomy" id="373384"/>
    <lineage>
        <taxon>Bacteria</taxon>
        <taxon>Pseudomonadati</taxon>
        <taxon>Pseudomonadota</taxon>
        <taxon>Gammaproteobacteria</taxon>
        <taxon>Enterobacterales</taxon>
        <taxon>Enterobacteriaceae</taxon>
        <taxon>Shigella</taxon>
    </lineage>
</organism>
<reference key="1">
    <citation type="journal article" date="2006" name="BMC Genomics">
        <title>Complete genome sequence of Shigella flexneri 5b and comparison with Shigella flexneri 2a.</title>
        <authorList>
            <person name="Nie H."/>
            <person name="Yang F."/>
            <person name="Zhang X."/>
            <person name="Yang J."/>
            <person name="Chen L."/>
            <person name="Wang J."/>
            <person name="Xiong Z."/>
            <person name="Peng J."/>
            <person name="Sun L."/>
            <person name="Dong J."/>
            <person name="Xue Y."/>
            <person name="Xu X."/>
            <person name="Chen S."/>
            <person name="Yao Z."/>
            <person name="Shen Y."/>
            <person name="Jin Q."/>
        </authorList>
    </citation>
    <scope>NUCLEOTIDE SEQUENCE [LARGE SCALE GENOMIC DNA]</scope>
    <source>
        <strain>8401</strain>
    </source>
</reference>
<accession>Q0SZK3</accession>
<proteinExistence type="inferred from homology"/>
<gene>
    <name evidence="1" type="primary">tusA</name>
    <name type="ordered locus">SFV_3473</name>
</gene>
<comment type="function">
    <text evidence="1">Sulfur carrier protein involved in sulfur trafficking in the cell. Part of a sulfur-relay system required for 2-thiolation during synthesis of 2-thiouridine of the modified wobble base 5-methylaminomethyl-2-thiouridine (mnm(5)s(2)U) in tRNA. Interacts with IscS and stimulates its cysteine desulfurase activity. Accepts an activated sulfur from IscS, which is then transferred to TusD, and thus determines the direction of sulfur flow from IscS to 2-thiouridine formation. Also appears to be involved in sulfur transfer for the biosynthesis of molybdopterin.</text>
</comment>
<comment type="pathway">
    <text evidence="1">tRNA modification.</text>
</comment>
<comment type="subunit">
    <text evidence="1">Interacts with IscS.</text>
</comment>
<comment type="subcellular location">
    <subcellularLocation>
        <location evidence="1">Cytoplasm</location>
    </subcellularLocation>
</comment>
<comment type="similarity">
    <text evidence="1">Belongs to the sulfur carrier protein TusA family.</text>
</comment>
<keyword id="KW-0963">Cytoplasm</keyword>
<keyword id="KW-0819">tRNA processing</keyword>
<name>TUSA_SHIF8</name>
<sequence>MTDLFSSPDHTLDALGLRCPEPVMMVRKTVRNMQPGETLLIIADDPATTRDIPGFCTFMEHELVAKETDGLPYRYLIRKGG</sequence>
<evidence type="ECO:0000255" key="1">
    <source>
        <dbReference type="HAMAP-Rule" id="MF_00413"/>
    </source>
</evidence>
<dbReference type="EMBL" id="CP000266">
    <property type="protein sequence ID" value="ABF05512.1"/>
    <property type="molecule type" value="Genomic_DNA"/>
</dbReference>
<dbReference type="RefSeq" id="WP_000130621.1">
    <property type="nucleotide sequence ID" value="NC_008258.1"/>
</dbReference>
<dbReference type="SMR" id="Q0SZK3"/>
<dbReference type="GeneID" id="93778521"/>
<dbReference type="KEGG" id="sfv:SFV_3473"/>
<dbReference type="HOGENOM" id="CLU_165255_5_0_6"/>
<dbReference type="Proteomes" id="UP000000659">
    <property type="component" value="Chromosome"/>
</dbReference>
<dbReference type="GO" id="GO:0005737">
    <property type="term" value="C:cytoplasm"/>
    <property type="evidence" value="ECO:0007669"/>
    <property type="project" value="UniProtKB-SubCell"/>
</dbReference>
<dbReference type="GO" id="GO:0097163">
    <property type="term" value="F:sulfur carrier activity"/>
    <property type="evidence" value="ECO:0007669"/>
    <property type="project" value="UniProtKB-UniRule"/>
</dbReference>
<dbReference type="GO" id="GO:0002143">
    <property type="term" value="P:tRNA wobble position uridine thiolation"/>
    <property type="evidence" value="ECO:0007669"/>
    <property type="project" value="InterPro"/>
</dbReference>
<dbReference type="CDD" id="cd03423">
    <property type="entry name" value="SirA"/>
    <property type="match status" value="1"/>
</dbReference>
<dbReference type="FunFam" id="3.30.110.40:FF:000002">
    <property type="entry name" value="Sulfur carrier protein TusA"/>
    <property type="match status" value="1"/>
</dbReference>
<dbReference type="Gene3D" id="3.30.110.40">
    <property type="entry name" value="TusA-like domain"/>
    <property type="match status" value="1"/>
</dbReference>
<dbReference type="HAMAP" id="MF_00413">
    <property type="entry name" value="Thiourid_synth_A"/>
    <property type="match status" value="1"/>
</dbReference>
<dbReference type="InterPro" id="IPR022931">
    <property type="entry name" value="Sulphur_carrier_TusA"/>
</dbReference>
<dbReference type="InterPro" id="IPR001455">
    <property type="entry name" value="TusA-like"/>
</dbReference>
<dbReference type="InterPro" id="IPR036868">
    <property type="entry name" value="TusA-like_sf"/>
</dbReference>
<dbReference type="NCBIfam" id="NF001423">
    <property type="entry name" value="PRK00299.1"/>
    <property type="match status" value="1"/>
</dbReference>
<dbReference type="PANTHER" id="PTHR33279:SF2">
    <property type="entry name" value="SULFUR CARRIER PROTEIN TUSA"/>
    <property type="match status" value="1"/>
</dbReference>
<dbReference type="PANTHER" id="PTHR33279">
    <property type="entry name" value="SULFUR CARRIER PROTEIN YEDF-RELATED"/>
    <property type="match status" value="1"/>
</dbReference>
<dbReference type="Pfam" id="PF01206">
    <property type="entry name" value="TusA"/>
    <property type="match status" value="1"/>
</dbReference>
<dbReference type="SUPFAM" id="SSF64307">
    <property type="entry name" value="SirA-like"/>
    <property type="match status" value="1"/>
</dbReference>
<dbReference type="PROSITE" id="PS01148">
    <property type="entry name" value="UPF0033"/>
    <property type="match status" value="1"/>
</dbReference>
<feature type="chain" id="PRO_1000050032" description="Sulfur carrier protein TusA">
    <location>
        <begin position="1"/>
        <end position="81"/>
    </location>
</feature>
<feature type="active site" description="Cysteine persulfide intermediate" evidence="1">
    <location>
        <position position="19"/>
    </location>
</feature>
<protein>
    <recommendedName>
        <fullName evidence="1">Sulfur carrier protein TusA</fullName>
    </recommendedName>
    <alternativeName>
        <fullName evidence="1">Sulfur mediator TusA</fullName>
    </alternativeName>
    <alternativeName>
        <fullName evidence="1">Sulfur transfer protein TusA</fullName>
    </alternativeName>
    <alternativeName>
        <fullName evidence="1">tRNA 2-thiouridine synthesizing protein A</fullName>
    </alternativeName>
</protein>